<accession>Q3BAQ6</accession>
<name>ATPF_PHAAO</name>
<gene>
    <name evidence="1" type="primary">atpF</name>
</gene>
<proteinExistence type="inferred from homology"/>
<sequence>MKNITDSFVSVGHWPSAGSFEFNTDILATNPINLSVVLGVLIFFGKGVLNDLLDKRKQRILSTIRNSEELRRGAIEQLERARVRLRKVEIEADEYRTNGYYEIEREKGNLINATCNSLERLENYKNETLFFEKQRAINKVRQEVLQQALQRALGTLNSCLNIEVHFRTISANIDILGSMEEITD</sequence>
<organism>
    <name type="scientific">Phalaenopsis aphrodite subsp. formosana</name>
    <name type="common">Moth orchid</name>
    <dbReference type="NCBI Taxonomy" id="308872"/>
    <lineage>
        <taxon>Eukaryota</taxon>
        <taxon>Viridiplantae</taxon>
        <taxon>Streptophyta</taxon>
        <taxon>Embryophyta</taxon>
        <taxon>Tracheophyta</taxon>
        <taxon>Spermatophyta</taxon>
        <taxon>Magnoliopsida</taxon>
        <taxon>Liliopsida</taxon>
        <taxon>Asparagales</taxon>
        <taxon>Orchidaceae</taxon>
        <taxon>Epidendroideae</taxon>
        <taxon>Vandeae</taxon>
        <taxon>Aeridinae</taxon>
        <taxon>Phalaenopsis</taxon>
    </lineage>
</organism>
<feature type="chain" id="PRO_0000368968" description="ATP synthase subunit b, chloroplastic">
    <location>
        <begin position="1"/>
        <end position="184"/>
    </location>
</feature>
<feature type="transmembrane region" description="Helical" evidence="1">
    <location>
        <begin position="27"/>
        <end position="49"/>
    </location>
</feature>
<reference key="1">
    <citation type="journal article" date="2006" name="Mol. Biol. Evol.">
        <title>The chloroplast genome of Phalaenopsis aphrodite (Orchidaceae): comparative analysis of evolutionary rate with that of grasses and its phylogenetic implications.</title>
        <authorList>
            <person name="Chang C.-C."/>
            <person name="Lin H.-C."/>
            <person name="Lin I.-P."/>
            <person name="Chow T.-Y."/>
            <person name="Chen H.-H."/>
            <person name="Chen W.-H."/>
            <person name="Cheng C.-H."/>
            <person name="Lin C.-Y."/>
            <person name="Liu S.-M."/>
            <person name="Chang C.-C."/>
            <person name="Chaw S.-M."/>
        </authorList>
    </citation>
    <scope>NUCLEOTIDE SEQUENCE [LARGE SCALE GENOMIC DNA]</scope>
    <source>
        <strain>cv. Taisugar TS-97</strain>
    </source>
</reference>
<comment type="function">
    <text evidence="1">F(1)F(0) ATP synthase produces ATP from ADP in the presence of a proton or sodium gradient. F-type ATPases consist of two structural domains, F(1) containing the extramembraneous catalytic core and F(0) containing the membrane proton channel, linked together by a central stalk and a peripheral stalk. During catalysis, ATP synthesis in the catalytic domain of F(1) is coupled via a rotary mechanism of the central stalk subunits to proton translocation.</text>
</comment>
<comment type="function">
    <text evidence="1">Component of the F(0) channel, it forms part of the peripheral stalk, linking F(1) to F(0).</text>
</comment>
<comment type="subunit">
    <text evidence="1">F-type ATPases have 2 components, F(1) - the catalytic core - and F(0) - the membrane proton channel. F(1) has five subunits: alpha(3), beta(3), gamma(1), delta(1), epsilon(1). F(0) has four main subunits: a(1), b(1), b'(1) and c(10-14). The alpha and beta chains form an alternating ring which encloses part of the gamma chain. F(1) is attached to F(0) by a central stalk formed by the gamma and epsilon chains, while a peripheral stalk is formed by the delta, b and b' chains.</text>
</comment>
<comment type="subcellular location">
    <subcellularLocation>
        <location evidence="1">Plastid</location>
        <location evidence="1">Chloroplast thylakoid membrane</location>
        <topology evidence="1">Single-pass membrane protein</topology>
    </subcellularLocation>
</comment>
<comment type="miscellaneous">
    <text>In plastids the F-type ATPase is also known as CF(1)CF(0).</text>
</comment>
<comment type="similarity">
    <text evidence="1">Belongs to the ATPase B chain family.</text>
</comment>
<keyword id="KW-0066">ATP synthesis</keyword>
<keyword id="KW-0138">CF(0)</keyword>
<keyword id="KW-0150">Chloroplast</keyword>
<keyword id="KW-0375">Hydrogen ion transport</keyword>
<keyword id="KW-0406">Ion transport</keyword>
<keyword id="KW-0472">Membrane</keyword>
<keyword id="KW-0934">Plastid</keyword>
<keyword id="KW-0793">Thylakoid</keyword>
<keyword id="KW-0812">Transmembrane</keyword>
<keyword id="KW-1133">Transmembrane helix</keyword>
<keyword id="KW-0813">Transport</keyword>
<evidence type="ECO:0000255" key="1">
    <source>
        <dbReference type="HAMAP-Rule" id="MF_01398"/>
    </source>
</evidence>
<geneLocation type="chloroplast"/>
<dbReference type="EMBL" id="AY916449">
    <property type="protein sequence ID" value="AAW82489.1"/>
    <property type="molecule type" value="Genomic_DNA"/>
</dbReference>
<dbReference type="RefSeq" id="YP_358562.1">
    <property type="nucleotide sequence ID" value="NC_007499.1"/>
</dbReference>
<dbReference type="SMR" id="Q3BAQ6"/>
<dbReference type="GeneID" id="3741664"/>
<dbReference type="GO" id="GO:0009535">
    <property type="term" value="C:chloroplast thylakoid membrane"/>
    <property type="evidence" value="ECO:0007669"/>
    <property type="project" value="UniProtKB-SubCell"/>
</dbReference>
<dbReference type="GO" id="GO:0045259">
    <property type="term" value="C:proton-transporting ATP synthase complex"/>
    <property type="evidence" value="ECO:0007669"/>
    <property type="project" value="UniProtKB-KW"/>
</dbReference>
<dbReference type="GO" id="GO:0046933">
    <property type="term" value="F:proton-transporting ATP synthase activity, rotational mechanism"/>
    <property type="evidence" value="ECO:0007669"/>
    <property type="project" value="UniProtKB-UniRule"/>
</dbReference>
<dbReference type="CDD" id="cd06503">
    <property type="entry name" value="ATP-synt_Fo_b"/>
    <property type="match status" value="1"/>
</dbReference>
<dbReference type="HAMAP" id="MF_01398">
    <property type="entry name" value="ATP_synth_b_bprime"/>
    <property type="match status" value="1"/>
</dbReference>
<dbReference type="InterPro" id="IPR002146">
    <property type="entry name" value="ATP_synth_b/b'su_bac/chlpt"/>
</dbReference>
<dbReference type="PANTHER" id="PTHR34264">
    <property type="entry name" value="ATP SYNTHASE SUBUNIT B, CHLOROPLASTIC"/>
    <property type="match status" value="1"/>
</dbReference>
<dbReference type="PANTHER" id="PTHR34264:SF8">
    <property type="entry name" value="ATP SYNTHASE SUBUNIT B, CHLOROPLASTIC"/>
    <property type="match status" value="1"/>
</dbReference>
<dbReference type="Pfam" id="PF00430">
    <property type="entry name" value="ATP-synt_B"/>
    <property type="match status" value="1"/>
</dbReference>
<protein>
    <recommendedName>
        <fullName evidence="1">ATP synthase subunit b, chloroplastic</fullName>
    </recommendedName>
    <alternativeName>
        <fullName evidence="1">ATP synthase F(0) sector subunit b</fullName>
    </alternativeName>
    <alternativeName>
        <fullName evidence="1">ATPase subunit I</fullName>
    </alternativeName>
</protein>